<accession>A5F263</accession>
<accession>C3LZM6</accession>
<dbReference type="EC" id="6.1.1.12" evidence="1"/>
<dbReference type="EMBL" id="CP000627">
    <property type="protein sequence ID" value="ABQ20637.1"/>
    <property type="molecule type" value="Genomic_DNA"/>
</dbReference>
<dbReference type="EMBL" id="CP001235">
    <property type="protein sequence ID" value="ACP09242.1"/>
    <property type="molecule type" value="Genomic_DNA"/>
</dbReference>
<dbReference type="RefSeq" id="WP_001256500.1">
    <property type="nucleotide sequence ID" value="NZ_JAACZH010000048.1"/>
</dbReference>
<dbReference type="SMR" id="A5F263"/>
<dbReference type="KEGG" id="vco:VC0395_A0735"/>
<dbReference type="KEGG" id="vcr:VC395_1232"/>
<dbReference type="PATRIC" id="fig|345073.21.peg.1199"/>
<dbReference type="eggNOG" id="COG0173">
    <property type="taxonomic scope" value="Bacteria"/>
</dbReference>
<dbReference type="HOGENOM" id="CLU_014330_3_2_6"/>
<dbReference type="OrthoDB" id="9802326at2"/>
<dbReference type="Proteomes" id="UP000000249">
    <property type="component" value="Chromosome 2"/>
</dbReference>
<dbReference type="GO" id="GO:0005737">
    <property type="term" value="C:cytoplasm"/>
    <property type="evidence" value="ECO:0007669"/>
    <property type="project" value="UniProtKB-SubCell"/>
</dbReference>
<dbReference type="GO" id="GO:0004815">
    <property type="term" value="F:aspartate-tRNA ligase activity"/>
    <property type="evidence" value="ECO:0007669"/>
    <property type="project" value="UniProtKB-UniRule"/>
</dbReference>
<dbReference type="GO" id="GO:0005524">
    <property type="term" value="F:ATP binding"/>
    <property type="evidence" value="ECO:0007669"/>
    <property type="project" value="UniProtKB-UniRule"/>
</dbReference>
<dbReference type="GO" id="GO:0003676">
    <property type="term" value="F:nucleic acid binding"/>
    <property type="evidence" value="ECO:0007669"/>
    <property type="project" value="InterPro"/>
</dbReference>
<dbReference type="GO" id="GO:0006422">
    <property type="term" value="P:aspartyl-tRNA aminoacylation"/>
    <property type="evidence" value="ECO:0007669"/>
    <property type="project" value="UniProtKB-UniRule"/>
</dbReference>
<dbReference type="CDD" id="cd00777">
    <property type="entry name" value="AspRS_core"/>
    <property type="match status" value="1"/>
</dbReference>
<dbReference type="CDD" id="cd04317">
    <property type="entry name" value="EcAspRS_like_N"/>
    <property type="match status" value="1"/>
</dbReference>
<dbReference type="FunFam" id="2.40.50.140:FF:000080">
    <property type="entry name" value="Aspartate--tRNA ligase"/>
    <property type="match status" value="1"/>
</dbReference>
<dbReference type="Gene3D" id="3.30.930.10">
    <property type="entry name" value="Bira Bifunctional Protein, Domain 2"/>
    <property type="match status" value="1"/>
</dbReference>
<dbReference type="Gene3D" id="3.30.1360.30">
    <property type="entry name" value="GAD-like domain"/>
    <property type="match status" value="1"/>
</dbReference>
<dbReference type="Gene3D" id="2.40.50.140">
    <property type="entry name" value="Nucleic acid-binding proteins"/>
    <property type="match status" value="1"/>
</dbReference>
<dbReference type="HAMAP" id="MF_00044">
    <property type="entry name" value="Asp_tRNA_synth_type1"/>
    <property type="match status" value="1"/>
</dbReference>
<dbReference type="InterPro" id="IPR004364">
    <property type="entry name" value="Aa-tRNA-synt_II"/>
</dbReference>
<dbReference type="InterPro" id="IPR006195">
    <property type="entry name" value="aa-tRNA-synth_II"/>
</dbReference>
<dbReference type="InterPro" id="IPR045864">
    <property type="entry name" value="aa-tRNA-synth_II/BPL/LPL"/>
</dbReference>
<dbReference type="InterPro" id="IPR004524">
    <property type="entry name" value="Asp-tRNA-ligase_1"/>
</dbReference>
<dbReference type="InterPro" id="IPR047089">
    <property type="entry name" value="Asp-tRNA-ligase_1_N"/>
</dbReference>
<dbReference type="InterPro" id="IPR002312">
    <property type="entry name" value="Asp/Asn-tRNA-synth_IIb"/>
</dbReference>
<dbReference type="InterPro" id="IPR047090">
    <property type="entry name" value="AspRS_core"/>
</dbReference>
<dbReference type="InterPro" id="IPR004115">
    <property type="entry name" value="GAD-like_sf"/>
</dbReference>
<dbReference type="InterPro" id="IPR029351">
    <property type="entry name" value="GAD_dom"/>
</dbReference>
<dbReference type="InterPro" id="IPR012340">
    <property type="entry name" value="NA-bd_OB-fold"/>
</dbReference>
<dbReference type="InterPro" id="IPR004365">
    <property type="entry name" value="NA-bd_OB_tRNA"/>
</dbReference>
<dbReference type="NCBIfam" id="TIGR00459">
    <property type="entry name" value="aspS_bact"/>
    <property type="match status" value="1"/>
</dbReference>
<dbReference type="NCBIfam" id="NF001750">
    <property type="entry name" value="PRK00476.1"/>
    <property type="match status" value="1"/>
</dbReference>
<dbReference type="PANTHER" id="PTHR22594:SF5">
    <property type="entry name" value="ASPARTATE--TRNA LIGASE, MITOCHONDRIAL"/>
    <property type="match status" value="1"/>
</dbReference>
<dbReference type="PANTHER" id="PTHR22594">
    <property type="entry name" value="ASPARTYL/LYSYL-TRNA SYNTHETASE"/>
    <property type="match status" value="1"/>
</dbReference>
<dbReference type="Pfam" id="PF02938">
    <property type="entry name" value="GAD"/>
    <property type="match status" value="1"/>
</dbReference>
<dbReference type="Pfam" id="PF00152">
    <property type="entry name" value="tRNA-synt_2"/>
    <property type="match status" value="1"/>
</dbReference>
<dbReference type="Pfam" id="PF01336">
    <property type="entry name" value="tRNA_anti-codon"/>
    <property type="match status" value="1"/>
</dbReference>
<dbReference type="PRINTS" id="PR01042">
    <property type="entry name" value="TRNASYNTHASP"/>
</dbReference>
<dbReference type="SUPFAM" id="SSF55681">
    <property type="entry name" value="Class II aaRS and biotin synthetases"/>
    <property type="match status" value="1"/>
</dbReference>
<dbReference type="SUPFAM" id="SSF55261">
    <property type="entry name" value="GAD domain-like"/>
    <property type="match status" value="1"/>
</dbReference>
<dbReference type="SUPFAM" id="SSF50249">
    <property type="entry name" value="Nucleic acid-binding proteins"/>
    <property type="match status" value="1"/>
</dbReference>
<dbReference type="PROSITE" id="PS50862">
    <property type="entry name" value="AA_TRNA_LIGASE_II"/>
    <property type="match status" value="1"/>
</dbReference>
<proteinExistence type="inferred from homology"/>
<evidence type="ECO:0000255" key="1">
    <source>
        <dbReference type="HAMAP-Rule" id="MF_00044"/>
    </source>
</evidence>
<comment type="function">
    <text evidence="1">Catalyzes the attachment of L-aspartate to tRNA(Asp) in a two-step reaction: L-aspartate is first activated by ATP to form Asp-AMP and then transferred to the acceptor end of tRNA(Asp).</text>
</comment>
<comment type="catalytic activity">
    <reaction evidence="1">
        <text>tRNA(Asp) + L-aspartate + ATP = L-aspartyl-tRNA(Asp) + AMP + diphosphate</text>
        <dbReference type="Rhea" id="RHEA:19649"/>
        <dbReference type="Rhea" id="RHEA-COMP:9660"/>
        <dbReference type="Rhea" id="RHEA-COMP:9678"/>
        <dbReference type="ChEBI" id="CHEBI:29991"/>
        <dbReference type="ChEBI" id="CHEBI:30616"/>
        <dbReference type="ChEBI" id="CHEBI:33019"/>
        <dbReference type="ChEBI" id="CHEBI:78442"/>
        <dbReference type="ChEBI" id="CHEBI:78516"/>
        <dbReference type="ChEBI" id="CHEBI:456215"/>
        <dbReference type="EC" id="6.1.1.12"/>
    </reaction>
</comment>
<comment type="subunit">
    <text evidence="1">Homodimer.</text>
</comment>
<comment type="subcellular location">
    <subcellularLocation>
        <location evidence="1">Cytoplasm</location>
    </subcellularLocation>
</comment>
<comment type="similarity">
    <text evidence="1">Belongs to the class-II aminoacyl-tRNA synthetase family. Type 1 subfamily.</text>
</comment>
<sequence>MRSHYCGHLNKSLVGQTVELCGWVNRRRDLGGLIFIDMRDREGIVQVVVDPDMADVFAVANQLRSEFCIKLTGEVRARPESQVNKEMATGEVELLARSLEIINRSDVLPLDFNQKNSEEQRLKYRYLDLRRPEMSDRIKLRAKASSFVRRFLDTHGFLDIETPVLTKATPEGARDYLVPSRVHKGSFYALPQSPQLFKQLLMMSGFDRYYQIVKCFRDEDLRADRQPEFTQIDIETSFMTAEQVRAVTEKMIREMWLELLNVDLGDFPIMPYSEAMRRFGSDKPDLRNPMELVDVADLLKDVDFKVFSGPANDPKGRVAALCIPGGAALTRKQIDEYTAFVAIYGAKGLAWLKVNDLAAGMEGIQSPVAKFLTEEIIQAIIERTQAQTGDIILFGADSAKVVAEALGALRLKAGKELGITNESAWAPLWVVDFPMFESDDEGNVAAMHHPFTSPLNLSPEQLKANPEEALSNAYDMVLNGYEVGGGSVRIHNAEMQSAVFDILGITPEEQRLKFGFLLDALKFGTPPHAGLAFGLDRLVMLLCGTENIRDVIAFPKTTAAACLMTDAPSLANPAALEELAIAVKLATKDKA</sequence>
<name>SYD_VIBC3</name>
<keyword id="KW-0030">Aminoacyl-tRNA synthetase</keyword>
<keyword id="KW-0067">ATP-binding</keyword>
<keyword id="KW-0963">Cytoplasm</keyword>
<keyword id="KW-0436">Ligase</keyword>
<keyword id="KW-0547">Nucleotide-binding</keyword>
<keyword id="KW-0648">Protein biosynthesis</keyword>
<organism>
    <name type="scientific">Vibrio cholerae serotype O1 (strain ATCC 39541 / Classical Ogawa 395 / O395)</name>
    <dbReference type="NCBI Taxonomy" id="345073"/>
    <lineage>
        <taxon>Bacteria</taxon>
        <taxon>Pseudomonadati</taxon>
        <taxon>Pseudomonadota</taxon>
        <taxon>Gammaproteobacteria</taxon>
        <taxon>Vibrionales</taxon>
        <taxon>Vibrionaceae</taxon>
        <taxon>Vibrio</taxon>
    </lineage>
</organism>
<reference key="1">
    <citation type="submission" date="2007-03" db="EMBL/GenBank/DDBJ databases">
        <authorList>
            <person name="Heidelberg J."/>
        </authorList>
    </citation>
    <scope>NUCLEOTIDE SEQUENCE [LARGE SCALE GENOMIC DNA]</scope>
    <source>
        <strain>ATCC 39541 / Classical Ogawa 395 / O395</strain>
    </source>
</reference>
<reference key="2">
    <citation type="journal article" date="2008" name="PLoS ONE">
        <title>A recalibrated molecular clock and independent origins for the cholera pandemic clones.</title>
        <authorList>
            <person name="Feng L."/>
            <person name="Reeves P.R."/>
            <person name="Lan R."/>
            <person name="Ren Y."/>
            <person name="Gao C."/>
            <person name="Zhou Z."/>
            <person name="Ren Y."/>
            <person name="Cheng J."/>
            <person name="Wang W."/>
            <person name="Wang J."/>
            <person name="Qian W."/>
            <person name="Li D."/>
            <person name="Wang L."/>
        </authorList>
    </citation>
    <scope>NUCLEOTIDE SEQUENCE [LARGE SCALE GENOMIC DNA]</scope>
    <source>
        <strain>ATCC 39541 / Classical Ogawa 395 / O395</strain>
    </source>
</reference>
<protein>
    <recommendedName>
        <fullName evidence="1">Aspartate--tRNA ligase</fullName>
        <ecNumber evidence="1">6.1.1.12</ecNumber>
    </recommendedName>
    <alternativeName>
        <fullName evidence="1">Aspartyl-tRNA synthetase</fullName>
        <shortName evidence="1">AspRS</shortName>
    </alternativeName>
</protein>
<feature type="chain" id="PRO_1000071088" description="Aspartate--tRNA ligase">
    <location>
        <begin position="1"/>
        <end position="591"/>
    </location>
</feature>
<feature type="region of interest" description="Aspartate" evidence="1">
    <location>
        <begin position="195"/>
        <end position="198"/>
    </location>
</feature>
<feature type="binding site" evidence="1">
    <location>
        <position position="171"/>
    </location>
    <ligand>
        <name>L-aspartate</name>
        <dbReference type="ChEBI" id="CHEBI:29991"/>
    </ligand>
</feature>
<feature type="binding site" evidence="1">
    <location>
        <begin position="217"/>
        <end position="219"/>
    </location>
    <ligand>
        <name>ATP</name>
        <dbReference type="ChEBI" id="CHEBI:30616"/>
    </ligand>
</feature>
<feature type="binding site" evidence="1">
    <location>
        <position position="217"/>
    </location>
    <ligand>
        <name>L-aspartate</name>
        <dbReference type="ChEBI" id="CHEBI:29991"/>
    </ligand>
</feature>
<feature type="binding site" evidence="1">
    <location>
        <position position="226"/>
    </location>
    <ligand>
        <name>ATP</name>
        <dbReference type="ChEBI" id="CHEBI:30616"/>
    </ligand>
</feature>
<feature type="binding site" evidence="1">
    <location>
        <position position="448"/>
    </location>
    <ligand>
        <name>L-aspartate</name>
        <dbReference type="ChEBI" id="CHEBI:29991"/>
    </ligand>
</feature>
<feature type="binding site" evidence="1">
    <location>
        <position position="482"/>
    </location>
    <ligand>
        <name>ATP</name>
        <dbReference type="ChEBI" id="CHEBI:30616"/>
    </ligand>
</feature>
<feature type="binding site" evidence="1">
    <location>
        <position position="489"/>
    </location>
    <ligand>
        <name>L-aspartate</name>
        <dbReference type="ChEBI" id="CHEBI:29991"/>
    </ligand>
</feature>
<feature type="binding site" evidence="1">
    <location>
        <begin position="534"/>
        <end position="537"/>
    </location>
    <ligand>
        <name>ATP</name>
        <dbReference type="ChEBI" id="CHEBI:30616"/>
    </ligand>
</feature>
<gene>
    <name evidence="1" type="primary">aspS</name>
    <name type="ordered locus">VC0395_A0735</name>
    <name type="ordered locus">VC395_1232</name>
</gene>